<evidence type="ECO:0000250" key="1">
    <source>
        <dbReference type="UniProtKB" id="Q6WAY2"/>
    </source>
</evidence>
<evidence type="ECO:0000250" key="2">
    <source>
        <dbReference type="UniProtKB" id="Q8TBJ4"/>
    </source>
</evidence>
<evidence type="ECO:0000255" key="3"/>
<evidence type="ECO:0000303" key="4">
    <source>
    </source>
</evidence>
<evidence type="ECO:0000303" key="5">
    <source>
    </source>
</evidence>
<evidence type="ECO:0000303" key="6">
    <source ref="2"/>
</evidence>
<evidence type="ECO:0000305" key="7"/>
<evidence type="ECO:0000305" key="8">
    <source>
    </source>
</evidence>
<evidence type="ECO:0000312" key="9">
    <source>
        <dbReference type="MGI" id="MGI:2445015"/>
    </source>
</evidence>
<evidence type="ECO:0007744" key="10">
    <source>
    </source>
</evidence>
<evidence type="ECO:0007744" key="11">
    <source>
    </source>
</evidence>
<proteinExistence type="evidence at protein level"/>
<protein>
    <recommendedName>
        <fullName evidence="2">Phospholipid phosphatase-related protein type 1</fullName>
    </recommendedName>
    <alternativeName>
        <fullName evidence="1">Inactive 2-lysophosphatidate phosphatase PLPPR1</fullName>
    </alternativeName>
    <alternativeName>
        <fullName evidence="2">Lipid phosphate phosphatase-related protein type 1</fullName>
    </alternativeName>
    <alternativeName>
        <fullName evidence="8">Plasticity-related gene 3 protein</fullName>
        <shortName evidence="4">PRG-3</shortName>
    </alternativeName>
</protein>
<name>PLPR1_MOUSE</name>
<dbReference type="EMBL" id="AY345342">
    <property type="protein sequence ID" value="AAR09144.1"/>
    <property type="molecule type" value="mRNA"/>
</dbReference>
<dbReference type="EMBL" id="AK220568">
    <property type="protein sequence ID" value="BAD90332.1"/>
    <property type="status" value="ALT_INIT"/>
    <property type="molecule type" value="mRNA"/>
</dbReference>
<dbReference type="EMBL" id="AK034251">
    <property type="protein sequence ID" value="BAC28649.1"/>
    <property type="molecule type" value="mRNA"/>
</dbReference>
<dbReference type="EMBL" id="AK043762">
    <property type="protein sequence ID" value="BAC31647.1"/>
    <property type="molecule type" value="mRNA"/>
</dbReference>
<dbReference type="EMBL" id="AK047614">
    <property type="protein sequence ID" value="BAC33101.1"/>
    <property type="molecule type" value="mRNA"/>
</dbReference>
<dbReference type="EMBL" id="AK087439">
    <property type="protein sequence ID" value="BAC39874.1"/>
    <property type="molecule type" value="mRNA"/>
</dbReference>
<dbReference type="EMBL" id="AK087514">
    <property type="protein sequence ID" value="BAC39907.1"/>
    <property type="molecule type" value="mRNA"/>
</dbReference>
<dbReference type="EMBL" id="AK160897">
    <property type="protein sequence ID" value="BAE36076.1"/>
    <property type="molecule type" value="mRNA"/>
</dbReference>
<dbReference type="EMBL" id="AL808138">
    <property type="status" value="NOT_ANNOTATED_CDS"/>
    <property type="molecule type" value="Genomic_DNA"/>
</dbReference>
<dbReference type="EMBL" id="AL928612">
    <property type="status" value="NOT_ANNOTATED_CDS"/>
    <property type="molecule type" value="Genomic_DNA"/>
</dbReference>
<dbReference type="EMBL" id="BX537352">
    <property type="status" value="NOT_ANNOTATED_CDS"/>
    <property type="molecule type" value="Genomic_DNA"/>
</dbReference>
<dbReference type="EMBL" id="BC096762">
    <property type="protein sequence ID" value="AAH96762.1"/>
    <property type="molecule type" value="mRNA"/>
</dbReference>
<dbReference type="CCDS" id="CCDS18170.1">
    <molecule id="Q8BFZ2-1"/>
</dbReference>
<dbReference type="RefSeq" id="NP_848871.1">
    <molecule id="Q8BFZ2-1"/>
    <property type="nucleotide sequence ID" value="NM_178756.4"/>
</dbReference>
<dbReference type="RefSeq" id="XP_006538031.1">
    <molecule id="Q8BFZ2-1"/>
    <property type="nucleotide sequence ID" value="XM_006537968.5"/>
</dbReference>
<dbReference type="RefSeq" id="XP_011248351.1">
    <molecule id="Q8BFZ2-1"/>
    <property type="nucleotide sequence ID" value="XM_011250049.4"/>
</dbReference>
<dbReference type="RefSeq" id="XP_017175739.1">
    <molecule id="Q8BFZ2-1"/>
    <property type="nucleotide sequence ID" value="XM_017320250.3"/>
</dbReference>
<dbReference type="RefSeq" id="XP_036020066.1">
    <molecule id="Q8BFZ2-1"/>
    <property type="nucleotide sequence ID" value="XM_036164173.1"/>
</dbReference>
<dbReference type="FunCoup" id="Q8BFZ2">
    <property type="interactions" value="213"/>
</dbReference>
<dbReference type="STRING" id="10090.ENSMUSP00000075966"/>
<dbReference type="GlyCosmos" id="Q8BFZ2">
    <property type="glycosylation" value="3 sites, No reported glycans"/>
</dbReference>
<dbReference type="GlyGen" id="Q8BFZ2">
    <property type="glycosylation" value="3 sites"/>
</dbReference>
<dbReference type="iPTMnet" id="Q8BFZ2"/>
<dbReference type="PhosphoSitePlus" id="Q8BFZ2"/>
<dbReference type="SwissPalm" id="Q8BFZ2"/>
<dbReference type="PaxDb" id="10090-ENSMUSP00000075966"/>
<dbReference type="ProteomicsDB" id="288258">
    <molecule id="Q8BFZ2-1"/>
</dbReference>
<dbReference type="ProteomicsDB" id="288259">
    <molecule id="Q8BFZ2-2"/>
</dbReference>
<dbReference type="Antibodypedia" id="14633">
    <property type="antibodies" value="41 antibodies from 9 providers"/>
</dbReference>
<dbReference type="DNASU" id="272031"/>
<dbReference type="Ensembl" id="ENSMUST00000076670.3">
    <molecule id="Q8BFZ2-1"/>
    <property type="protein sequence ID" value="ENSMUSP00000075966.3"/>
    <property type="gene ID" value="ENSMUSG00000063446.5"/>
</dbReference>
<dbReference type="GeneID" id="272031"/>
<dbReference type="KEGG" id="mmu:272031"/>
<dbReference type="UCSC" id="uc008svp.1">
    <molecule id="Q8BFZ2-1"/>
    <property type="organism name" value="mouse"/>
</dbReference>
<dbReference type="UCSC" id="uc012dea.1">
    <molecule id="Q8BFZ2-2"/>
    <property type="organism name" value="mouse"/>
</dbReference>
<dbReference type="AGR" id="MGI:2445015"/>
<dbReference type="CTD" id="54886"/>
<dbReference type="MGI" id="MGI:2445015">
    <property type="gene designation" value="Plppr1"/>
</dbReference>
<dbReference type="VEuPathDB" id="HostDB:ENSMUSG00000063446"/>
<dbReference type="eggNOG" id="KOG3030">
    <property type="taxonomic scope" value="Eukaryota"/>
</dbReference>
<dbReference type="GeneTree" id="ENSGT00940000158875"/>
<dbReference type="HOGENOM" id="CLU_021458_1_0_1"/>
<dbReference type="InParanoid" id="Q8BFZ2"/>
<dbReference type="OMA" id="CRAHHEF"/>
<dbReference type="OrthoDB" id="10030083at2759"/>
<dbReference type="PhylomeDB" id="Q8BFZ2"/>
<dbReference type="TreeFam" id="TF316040"/>
<dbReference type="Reactome" id="R-MMU-419408">
    <property type="pathway name" value="Lysosphingolipid and LPA receptors"/>
</dbReference>
<dbReference type="BioGRID-ORCS" id="272031">
    <property type="hits" value="3 hits in 45 CRISPR screens"/>
</dbReference>
<dbReference type="ChiTaRS" id="Plppr1">
    <property type="organism name" value="mouse"/>
</dbReference>
<dbReference type="PRO" id="PR:Q8BFZ2"/>
<dbReference type="Proteomes" id="UP000000589">
    <property type="component" value="Chromosome 4"/>
</dbReference>
<dbReference type="RNAct" id="Q8BFZ2">
    <property type="molecule type" value="protein"/>
</dbReference>
<dbReference type="Bgee" id="ENSMUSG00000063446">
    <property type="expression patterns" value="Expressed in layer of neocortex and 85 other cell types or tissues"/>
</dbReference>
<dbReference type="GO" id="GO:0043005">
    <property type="term" value="C:neuron projection"/>
    <property type="evidence" value="ECO:0000250"/>
    <property type="project" value="UniProtKB"/>
</dbReference>
<dbReference type="GO" id="GO:0005654">
    <property type="term" value="C:nucleoplasm"/>
    <property type="evidence" value="ECO:0007669"/>
    <property type="project" value="Ensembl"/>
</dbReference>
<dbReference type="GO" id="GO:0005886">
    <property type="term" value="C:plasma membrane"/>
    <property type="evidence" value="ECO:0000250"/>
    <property type="project" value="UniProtKB"/>
</dbReference>
<dbReference type="GO" id="GO:0007399">
    <property type="term" value="P:nervous system development"/>
    <property type="evidence" value="ECO:0000250"/>
    <property type="project" value="UniProtKB"/>
</dbReference>
<dbReference type="GO" id="GO:0006644">
    <property type="term" value="P:phospholipid metabolic process"/>
    <property type="evidence" value="ECO:0007669"/>
    <property type="project" value="InterPro"/>
</dbReference>
<dbReference type="CDD" id="cd03384">
    <property type="entry name" value="PAP2_wunen"/>
    <property type="match status" value="1"/>
</dbReference>
<dbReference type="FunFam" id="1.20.144.10:FF:000005">
    <property type="entry name" value="phospholipid phosphatase-related protein type 1"/>
    <property type="match status" value="1"/>
</dbReference>
<dbReference type="Gene3D" id="1.20.144.10">
    <property type="entry name" value="Phosphatidic acid phosphatase type 2/haloperoxidase"/>
    <property type="match status" value="1"/>
</dbReference>
<dbReference type="InterPro" id="IPR036938">
    <property type="entry name" value="P_Acid_Pase_2/haloperoxi_sf"/>
</dbReference>
<dbReference type="InterPro" id="IPR000326">
    <property type="entry name" value="P_Acid_Pase_2/haloperoxidase"/>
</dbReference>
<dbReference type="InterPro" id="IPR043216">
    <property type="entry name" value="PA_PP_rel"/>
</dbReference>
<dbReference type="PANTHER" id="PTHR10165">
    <property type="entry name" value="LIPID PHOSPHATE PHOSPHATASE"/>
    <property type="match status" value="1"/>
</dbReference>
<dbReference type="PANTHER" id="PTHR10165:SF41">
    <property type="entry name" value="PHOSPHOLIPID PHOSPHATASE-RELATED PROTEIN TYPE 1"/>
    <property type="match status" value="1"/>
</dbReference>
<dbReference type="Pfam" id="PF01569">
    <property type="entry name" value="PAP2"/>
    <property type="match status" value="1"/>
</dbReference>
<dbReference type="SMART" id="SM00014">
    <property type="entry name" value="acidPPc"/>
    <property type="match status" value="1"/>
</dbReference>
<dbReference type="SUPFAM" id="SSF48317">
    <property type="entry name" value="Acid phosphatase/Vanadium-dependent haloperoxidase"/>
    <property type="match status" value="1"/>
</dbReference>
<keyword id="KW-0025">Alternative splicing</keyword>
<keyword id="KW-1003">Cell membrane</keyword>
<keyword id="KW-0966">Cell projection</keyword>
<keyword id="KW-0325">Glycoprotein</keyword>
<keyword id="KW-0472">Membrane</keyword>
<keyword id="KW-0597">Phosphoprotein</keyword>
<keyword id="KW-1185">Reference proteome</keyword>
<keyword id="KW-0812">Transmembrane</keyword>
<keyword id="KW-1133">Transmembrane helix</keyword>
<organism>
    <name type="scientific">Mus musculus</name>
    <name type="common">Mouse</name>
    <dbReference type="NCBI Taxonomy" id="10090"/>
    <lineage>
        <taxon>Eukaryota</taxon>
        <taxon>Metazoa</taxon>
        <taxon>Chordata</taxon>
        <taxon>Craniata</taxon>
        <taxon>Vertebrata</taxon>
        <taxon>Euteleostomi</taxon>
        <taxon>Mammalia</taxon>
        <taxon>Eutheria</taxon>
        <taxon>Euarchontoglires</taxon>
        <taxon>Glires</taxon>
        <taxon>Rodentia</taxon>
        <taxon>Myomorpha</taxon>
        <taxon>Muroidea</taxon>
        <taxon>Muridae</taxon>
        <taxon>Murinae</taxon>
        <taxon>Mus</taxon>
        <taxon>Mus</taxon>
    </lineage>
</organism>
<reference key="1">
    <citation type="journal article" date="2004" name="Eur. J. Neurosci.">
        <title>Molecular cloning and expression regulation of PRG-3, a new member of the plasticity-related gene family.</title>
        <authorList>
            <person name="Savaskan N.E."/>
            <person name="Brauer A.U."/>
            <person name="Nitsch R."/>
        </authorList>
    </citation>
    <scope>NUCLEOTIDE SEQUENCE [MRNA] (ISOFORM 1)</scope>
</reference>
<reference key="2">
    <citation type="submission" date="2005-02" db="EMBL/GenBank/DDBJ databases">
        <title>Prediction of the coding sequences of mouse homologues of KIAA gene. The complete nucleotide sequences of mouse KIAA-homologous cDNAs identified by screening of terminal sequences of cDNA clones randomly sampled from size-fractionated libraries.</title>
        <authorList>
            <person name="Okazaki N."/>
            <person name="Kikuno R.F."/>
            <person name="Ohara R."/>
            <person name="Inamoto S."/>
            <person name="Nagase T."/>
            <person name="Ohara O."/>
            <person name="Koga H."/>
        </authorList>
    </citation>
    <scope>NUCLEOTIDE SEQUENCE [LARGE SCALE MRNA] (ISOFORM 1)</scope>
    <source>
        <tissue>Fetal brain</tissue>
    </source>
</reference>
<reference key="3">
    <citation type="journal article" date="2005" name="Science">
        <title>The transcriptional landscape of the mammalian genome.</title>
        <authorList>
            <person name="Carninci P."/>
            <person name="Kasukawa T."/>
            <person name="Katayama S."/>
            <person name="Gough J."/>
            <person name="Frith M.C."/>
            <person name="Maeda N."/>
            <person name="Oyama R."/>
            <person name="Ravasi T."/>
            <person name="Lenhard B."/>
            <person name="Wells C."/>
            <person name="Kodzius R."/>
            <person name="Shimokawa K."/>
            <person name="Bajic V.B."/>
            <person name="Brenner S.E."/>
            <person name="Batalov S."/>
            <person name="Forrest A.R."/>
            <person name="Zavolan M."/>
            <person name="Davis M.J."/>
            <person name="Wilming L.G."/>
            <person name="Aidinis V."/>
            <person name="Allen J.E."/>
            <person name="Ambesi-Impiombato A."/>
            <person name="Apweiler R."/>
            <person name="Aturaliya R.N."/>
            <person name="Bailey T.L."/>
            <person name="Bansal M."/>
            <person name="Baxter L."/>
            <person name="Beisel K.W."/>
            <person name="Bersano T."/>
            <person name="Bono H."/>
            <person name="Chalk A.M."/>
            <person name="Chiu K.P."/>
            <person name="Choudhary V."/>
            <person name="Christoffels A."/>
            <person name="Clutterbuck D.R."/>
            <person name="Crowe M.L."/>
            <person name="Dalla E."/>
            <person name="Dalrymple B.P."/>
            <person name="de Bono B."/>
            <person name="Della Gatta G."/>
            <person name="di Bernardo D."/>
            <person name="Down T."/>
            <person name="Engstrom P."/>
            <person name="Fagiolini M."/>
            <person name="Faulkner G."/>
            <person name="Fletcher C.F."/>
            <person name="Fukushima T."/>
            <person name="Furuno M."/>
            <person name="Futaki S."/>
            <person name="Gariboldi M."/>
            <person name="Georgii-Hemming P."/>
            <person name="Gingeras T.R."/>
            <person name="Gojobori T."/>
            <person name="Green R.E."/>
            <person name="Gustincich S."/>
            <person name="Harbers M."/>
            <person name="Hayashi Y."/>
            <person name="Hensch T.K."/>
            <person name="Hirokawa N."/>
            <person name="Hill D."/>
            <person name="Huminiecki L."/>
            <person name="Iacono M."/>
            <person name="Ikeo K."/>
            <person name="Iwama A."/>
            <person name="Ishikawa T."/>
            <person name="Jakt M."/>
            <person name="Kanapin A."/>
            <person name="Katoh M."/>
            <person name="Kawasawa Y."/>
            <person name="Kelso J."/>
            <person name="Kitamura H."/>
            <person name="Kitano H."/>
            <person name="Kollias G."/>
            <person name="Krishnan S.P."/>
            <person name="Kruger A."/>
            <person name="Kummerfeld S.K."/>
            <person name="Kurochkin I.V."/>
            <person name="Lareau L.F."/>
            <person name="Lazarevic D."/>
            <person name="Lipovich L."/>
            <person name="Liu J."/>
            <person name="Liuni S."/>
            <person name="McWilliam S."/>
            <person name="Madan Babu M."/>
            <person name="Madera M."/>
            <person name="Marchionni L."/>
            <person name="Matsuda H."/>
            <person name="Matsuzawa S."/>
            <person name="Miki H."/>
            <person name="Mignone F."/>
            <person name="Miyake S."/>
            <person name="Morris K."/>
            <person name="Mottagui-Tabar S."/>
            <person name="Mulder N."/>
            <person name="Nakano N."/>
            <person name="Nakauchi H."/>
            <person name="Ng P."/>
            <person name="Nilsson R."/>
            <person name="Nishiguchi S."/>
            <person name="Nishikawa S."/>
            <person name="Nori F."/>
            <person name="Ohara O."/>
            <person name="Okazaki Y."/>
            <person name="Orlando V."/>
            <person name="Pang K.C."/>
            <person name="Pavan W.J."/>
            <person name="Pavesi G."/>
            <person name="Pesole G."/>
            <person name="Petrovsky N."/>
            <person name="Piazza S."/>
            <person name="Reed J."/>
            <person name="Reid J.F."/>
            <person name="Ring B.Z."/>
            <person name="Ringwald M."/>
            <person name="Rost B."/>
            <person name="Ruan Y."/>
            <person name="Salzberg S.L."/>
            <person name="Sandelin A."/>
            <person name="Schneider C."/>
            <person name="Schoenbach C."/>
            <person name="Sekiguchi K."/>
            <person name="Semple C.A."/>
            <person name="Seno S."/>
            <person name="Sessa L."/>
            <person name="Sheng Y."/>
            <person name="Shibata Y."/>
            <person name="Shimada H."/>
            <person name="Shimada K."/>
            <person name="Silva D."/>
            <person name="Sinclair B."/>
            <person name="Sperling S."/>
            <person name="Stupka E."/>
            <person name="Sugiura K."/>
            <person name="Sultana R."/>
            <person name="Takenaka Y."/>
            <person name="Taki K."/>
            <person name="Tammoja K."/>
            <person name="Tan S.L."/>
            <person name="Tang S."/>
            <person name="Taylor M.S."/>
            <person name="Tegner J."/>
            <person name="Teichmann S.A."/>
            <person name="Ueda H.R."/>
            <person name="van Nimwegen E."/>
            <person name="Verardo R."/>
            <person name="Wei C.L."/>
            <person name="Yagi K."/>
            <person name="Yamanishi H."/>
            <person name="Zabarovsky E."/>
            <person name="Zhu S."/>
            <person name="Zimmer A."/>
            <person name="Hide W."/>
            <person name="Bult C."/>
            <person name="Grimmond S.M."/>
            <person name="Teasdale R.D."/>
            <person name="Liu E.T."/>
            <person name="Brusic V."/>
            <person name="Quackenbush J."/>
            <person name="Wahlestedt C."/>
            <person name="Mattick J.S."/>
            <person name="Hume D.A."/>
            <person name="Kai C."/>
            <person name="Sasaki D."/>
            <person name="Tomaru Y."/>
            <person name="Fukuda S."/>
            <person name="Kanamori-Katayama M."/>
            <person name="Suzuki M."/>
            <person name="Aoki J."/>
            <person name="Arakawa T."/>
            <person name="Iida J."/>
            <person name="Imamura K."/>
            <person name="Itoh M."/>
            <person name="Kato T."/>
            <person name="Kawaji H."/>
            <person name="Kawagashira N."/>
            <person name="Kawashima T."/>
            <person name="Kojima M."/>
            <person name="Kondo S."/>
            <person name="Konno H."/>
            <person name="Nakano K."/>
            <person name="Ninomiya N."/>
            <person name="Nishio T."/>
            <person name="Okada M."/>
            <person name="Plessy C."/>
            <person name="Shibata K."/>
            <person name="Shiraki T."/>
            <person name="Suzuki S."/>
            <person name="Tagami M."/>
            <person name="Waki K."/>
            <person name="Watahiki A."/>
            <person name="Okamura-Oho Y."/>
            <person name="Suzuki H."/>
            <person name="Kawai J."/>
            <person name="Hayashizaki Y."/>
        </authorList>
    </citation>
    <scope>NUCLEOTIDE SEQUENCE [LARGE SCALE MRNA] (ISOFORMS 1 AND 2)</scope>
    <source>
        <strain>C57BL/6J</strain>
        <tissue>Brain cortex</tissue>
        <tissue>Corpus striatum</tissue>
        <tissue>Diencephalon</tissue>
        <tissue>Eye</tissue>
    </source>
</reference>
<reference key="4">
    <citation type="journal article" date="2009" name="PLoS Biol.">
        <title>Lineage-specific biology revealed by a finished genome assembly of the mouse.</title>
        <authorList>
            <person name="Church D.M."/>
            <person name="Goodstadt L."/>
            <person name="Hillier L.W."/>
            <person name="Zody M.C."/>
            <person name="Goldstein S."/>
            <person name="She X."/>
            <person name="Bult C.J."/>
            <person name="Agarwala R."/>
            <person name="Cherry J.L."/>
            <person name="DiCuccio M."/>
            <person name="Hlavina W."/>
            <person name="Kapustin Y."/>
            <person name="Meric P."/>
            <person name="Maglott D."/>
            <person name="Birtle Z."/>
            <person name="Marques A.C."/>
            <person name="Graves T."/>
            <person name="Zhou S."/>
            <person name="Teague B."/>
            <person name="Potamousis K."/>
            <person name="Churas C."/>
            <person name="Place M."/>
            <person name="Herschleb J."/>
            <person name="Runnheim R."/>
            <person name="Forrest D."/>
            <person name="Amos-Landgraf J."/>
            <person name="Schwartz D.C."/>
            <person name="Cheng Z."/>
            <person name="Lindblad-Toh K."/>
            <person name="Eichler E.E."/>
            <person name="Ponting C.P."/>
        </authorList>
    </citation>
    <scope>NUCLEOTIDE SEQUENCE [LARGE SCALE GENOMIC DNA]</scope>
    <source>
        <strain>C57BL/6J</strain>
    </source>
</reference>
<reference key="5">
    <citation type="journal article" date="2004" name="Genome Res.">
        <title>The status, quality, and expansion of the NIH full-length cDNA project: the Mammalian Gene Collection (MGC).</title>
        <authorList>
            <consortium name="The MGC Project Team"/>
        </authorList>
    </citation>
    <scope>NUCLEOTIDE SEQUENCE [LARGE SCALE MRNA] (ISOFORM 1)</scope>
    <source>
        <strain>CD-1</strain>
        <tissue>Neural stem cell</tissue>
    </source>
</reference>
<reference key="6">
    <citation type="journal article" date="2004" name="Mol. Cell. Proteomics">
        <title>Phosphoproteomic analysis of the developing mouse brain.</title>
        <authorList>
            <person name="Ballif B.A."/>
            <person name="Villen J."/>
            <person name="Beausoleil S.A."/>
            <person name="Schwartz D."/>
            <person name="Gygi S.P."/>
        </authorList>
    </citation>
    <scope>PHOSPHORYLATION [LARGE SCALE ANALYSIS] AT SER-307</scope>
    <scope>IDENTIFICATION BY MASS SPECTROMETRY [LARGE SCALE ANALYSIS]</scope>
    <source>
        <tissue>Embryonic brain</tissue>
    </source>
</reference>
<reference key="7">
    <citation type="journal article" date="2010" name="Cell">
        <title>A tissue-specific atlas of mouse protein phosphorylation and expression.</title>
        <authorList>
            <person name="Huttlin E.L."/>
            <person name="Jedrychowski M.P."/>
            <person name="Elias J.E."/>
            <person name="Goswami T."/>
            <person name="Rad R."/>
            <person name="Beausoleil S.A."/>
            <person name="Villen J."/>
            <person name="Haas W."/>
            <person name="Sowa M.E."/>
            <person name="Gygi S.P."/>
        </authorList>
    </citation>
    <scope>PHOSPHORYLATION [LARGE SCALE ANALYSIS] AT SER-307</scope>
    <scope>IDENTIFICATION BY MASS SPECTROMETRY [LARGE SCALE ANALYSIS]</scope>
    <source>
        <tissue>Brain</tissue>
    </source>
</reference>
<feature type="chain" id="PRO_0000317533" description="Phospholipid phosphatase-related protein type 1">
    <location>
        <begin position="1"/>
        <end position="325"/>
    </location>
</feature>
<feature type="transmembrane region" description="Helical" evidence="3">
    <location>
        <begin position="13"/>
        <end position="33"/>
    </location>
</feature>
<feature type="transmembrane region" description="Helical" evidence="3">
    <location>
        <begin position="67"/>
        <end position="87"/>
    </location>
</feature>
<feature type="transmembrane region" description="Helical" evidence="3">
    <location>
        <begin position="127"/>
        <end position="147"/>
    </location>
</feature>
<feature type="transmembrane region" description="Helical" evidence="3">
    <location>
        <begin position="201"/>
        <end position="218"/>
    </location>
</feature>
<feature type="transmembrane region" description="Helical" evidence="3">
    <location>
        <begin position="230"/>
        <end position="247"/>
    </location>
</feature>
<feature type="transmembrane region" description="Helical" evidence="3">
    <location>
        <begin position="257"/>
        <end position="277"/>
    </location>
</feature>
<feature type="modified residue" description="Phosphoserine" evidence="10 11">
    <location>
        <position position="307"/>
    </location>
</feature>
<feature type="glycosylation site" description="N-linked (GlcNAc...) asparagine" evidence="3">
    <location>
        <position position="5"/>
    </location>
</feature>
<feature type="glycosylation site" description="N-linked (GlcNAc...) asparagine" evidence="3">
    <location>
        <position position="163"/>
    </location>
</feature>
<feature type="glycosylation site" description="N-linked (GlcNAc...) asparagine" evidence="3">
    <location>
        <position position="316"/>
    </location>
</feature>
<feature type="splice variant" id="VSP_031009" description="In isoform 2." evidence="5">
    <location>
        <begin position="129"/>
        <end position="158"/>
    </location>
</feature>
<feature type="sequence conflict" description="In Ref. 5; AAH96762." evidence="7" ref="5">
    <original>P</original>
    <variation>L</variation>
    <location>
        <position position="58"/>
    </location>
</feature>
<feature type="sequence conflict" description="In Ref. 3; BAC39874." evidence="7" ref="3">
    <original>E</original>
    <variation>G</variation>
    <location>
        <position position="190"/>
    </location>
</feature>
<gene>
    <name evidence="9" type="primary">Plppr1</name>
    <name evidence="6" type="synonym">Kiaa4247</name>
    <name evidence="2" type="synonym">Lppr1</name>
    <name type="synonym">Prg3</name>
</gene>
<sequence length="325" mass="35932">MAVENNTQRSYSIIPCFIFVELVIMAGTVLLAYYFECTDTFQVHIQGFFCQDGDLMKPYPGTEEESFISPLVLYCVLAATPTAIIFIGEISMYFIKSTRESLIAEEKMILTGDCCYLSPLLRRIIRFIGVFAFGLFATDIFVNAGQVVTGHLTPYFLTVCQPNYTSTDCRAHQQFINNGNICTGDLEVIEKARRSFPSKHAALSIYSALYATMYITSTIKTKSSRLAKPVLCLGTLCTAFLTGLNRVSEYRNHCSDVIAGFILGTAVALFLGMCVVHNFRGTQGSPSKPKPEDPRGVPLMAFPRIESPLETLSAQNHSASMTEVT</sequence>
<accession>Q8BFZ2</accession>
<accession>Q4V9R3</accession>
<accession>Q5DTF2</accession>
<accession>Q8BID2</accession>
<accession>Q8BIQ1</accession>
<comment type="function">
    <text evidence="1">May play a role in neurite outgrowth and neurogenesis.</text>
</comment>
<comment type="subcellular location">
    <subcellularLocation>
        <location evidence="1">Cell membrane</location>
        <topology evidence="3">Multi-pass membrane protein</topology>
    </subcellularLocation>
    <subcellularLocation>
        <location evidence="1">Cell projection</location>
        <location evidence="1">Neuron projection</location>
    </subcellularLocation>
</comment>
<comment type="alternative products">
    <event type="alternative splicing"/>
    <isoform>
        <id>Q8BFZ2-1</id>
        <name>1</name>
        <sequence type="displayed"/>
    </isoform>
    <isoform>
        <id>Q8BFZ2-2</id>
        <name>2</name>
        <sequence type="described" ref="VSP_031009"/>
    </isoform>
</comment>
<comment type="similarity">
    <text evidence="7">Belongs to the PA-phosphatase related phosphoesterase family.</text>
</comment>
<comment type="caution">
    <text evidence="1">Has no 2-lysophosphatidate/LPA phosphatase activity. This is supported by the fact that the phosphatase sequence motifs as well as the His residue acting as a nucleophile in active phosphatases of the PA-phosphatase related phosphoesterase family are not conserved.</text>
</comment>
<comment type="sequence caution" evidence="7">
    <conflict type="erroneous initiation">
        <sequence resource="EMBL-CDS" id="BAD90332"/>
    </conflict>
</comment>